<evidence type="ECO:0000250" key="1"/>
<evidence type="ECO:0000255" key="2">
    <source>
        <dbReference type="PROSITE-ProRule" id="PRU00691"/>
    </source>
</evidence>
<evidence type="ECO:0000305" key="3"/>
<organism>
    <name type="scientific">Salmonella enteritidis</name>
    <dbReference type="NCBI Taxonomy" id="149539"/>
    <lineage>
        <taxon>Bacteria</taxon>
        <taxon>Pseudomonadati</taxon>
        <taxon>Pseudomonadota</taxon>
        <taxon>Gammaproteobacteria</taxon>
        <taxon>Enterobacterales</taxon>
        <taxon>Enterobacteriaceae</taxon>
        <taxon>Salmonella</taxon>
    </lineage>
</organism>
<proteinExistence type="inferred from homology"/>
<keyword id="KW-1015">Disulfide bond</keyword>
<keyword id="KW-0574">Periplasm</keyword>
<keyword id="KW-0676">Redox-active center</keyword>
<keyword id="KW-0732">Signal</keyword>
<accession>P0A2I0</accession>
<accession>O30848</accession>
<accession>O69191</accession>
<name>DSBA_SALEN</name>
<dbReference type="EMBL" id="AF067152">
    <property type="protein sequence ID" value="AAC17906.1"/>
    <property type="molecule type" value="Genomic_DNA"/>
</dbReference>
<dbReference type="RefSeq" id="WP_000725364.1">
    <property type="nucleotide sequence ID" value="NZ_WIDC01000204.1"/>
</dbReference>
<dbReference type="SMR" id="P0A2I0"/>
<dbReference type="PATRIC" id="fig|149539.316.peg.4079"/>
<dbReference type="OMA" id="NAIHKQK"/>
<dbReference type="GO" id="GO:0042597">
    <property type="term" value="C:periplasmic space"/>
    <property type="evidence" value="ECO:0007669"/>
    <property type="project" value="UniProtKB-SubCell"/>
</dbReference>
<dbReference type="GO" id="GO:0015036">
    <property type="term" value="F:disulfide oxidoreductase activity"/>
    <property type="evidence" value="ECO:0007669"/>
    <property type="project" value="UniProtKB-ARBA"/>
</dbReference>
<dbReference type="CDD" id="cd03019">
    <property type="entry name" value="DsbA_DsbA"/>
    <property type="match status" value="1"/>
</dbReference>
<dbReference type="Gene3D" id="3.40.30.10">
    <property type="entry name" value="Glutaredoxin"/>
    <property type="match status" value="1"/>
</dbReference>
<dbReference type="InterPro" id="IPR001853">
    <property type="entry name" value="DSBA-like_thioredoxin_dom"/>
</dbReference>
<dbReference type="InterPro" id="IPR023205">
    <property type="entry name" value="DsbA/DsbL"/>
</dbReference>
<dbReference type="InterPro" id="IPR050824">
    <property type="entry name" value="Thiol_disulfide_DsbA"/>
</dbReference>
<dbReference type="InterPro" id="IPR036249">
    <property type="entry name" value="Thioredoxin-like_sf"/>
</dbReference>
<dbReference type="InterPro" id="IPR017937">
    <property type="entry name" value="Thioredoxin_CS"/>
</dbReference>
<dbReference type="InterPro" id="IPR013766">
    <property type="entry name" value="Thioredoxin_domain"/>
</dbReference>
<dbReference type="NCBIfam" id="NF008198">
    <property type="entry name" value="PRK10954.1"/>
    <property type="match status" value="1"/>
</dbReference>
<dbReference type="PANTHER" id="PTHR35891">
    <property type="entry name" value="THIOL:DISULFIDE INTERCHANGE PROTEIN DSBA"/>
    <property type="match status" value="1"/>
</dbReference>
<dbReference type="PANTHER" id="PTHR35891:SF2">
    <property type="entry name" value="THIOL:DISULFIDE INTERCHANGE PROTEIN DSBA"/>
    <property type="match status" value="1"/>
</dbReference>
<dbReference type="Pfam" id="PF01323">
    <property type="entry name" value="DSBA"/>
    <property type="match status" value="1"/>
</dbReference>
<dbReference type="PIRSF" id="PIRSF001488">
    <property type="entry name" value="Tdi_protein"/>
    <property type="match status" value="1"/>
</dbReference>
<dbReference type="SUPFAM" id="SSF52833">
    <property type="entry name" value="Thioredoxin-like"/>
    <property type="match status" value="1"/>
</dbReference>
<dbReference type="PROSITE" id="PS00194">
    <property type="entry name" value="THIOREDOXIN_1"/>
    <property type="match status" value="1"/>
</dbReference>
<dbReference type="PROSITE" id="PS51352">
    <property type="entry name" value="THIOREDOXIN_2"/>
    <property type="match status" value="1"/>
</dbReference>
<gene>
    <name type="primary">dsbA</name>
</gene>
<comment type="function">
    <text evidence="1">Required for disulfide bond formation in some periplasmic proteins such as PhoA or OmpA. Acts by transferring its disulfide bond to other proteins and is reduced in the process. DsbA is reoxidized by DsbB. It is required for pilus biogenesis (By similarity).</text>
</comment>
<comment type="subcellular location">
    <subcellularLocation>
        <location evidence="1">Periplasm</location>
    </subcellularLocation>
</comment>
<comment type="similarity">
    <text evidence="3">Belongs to the thioredoxin family. DsbA subfamily.</text>
</comment>
<protein>
    <recommendedName>
        <fullName>Thiol:disulfide interchange protein DsbA</fullName>
    </recommendedName>
</protein>
<sequence length="207" mass="22911">MKKIWLALAGMVLAFSASAAQISDGKQYITLDKPVAGEPQVLEFFSFYCPHCYQFEEVLHVSDNVKKKLPEGTKMTKYHVEFLGPLGKELTQAWAVAMALGVEDKVTVPLFEAVQKTQTVQSAADIRKVFVDAGVKGEDYDAAWNSFVVKSLVAQQEKAAADLQLQGVPAMFVNGKYQINPQGMDTSSMDVFVQQYADTVKYLVDKK</sequence>
<feature type="signal peptide" evidence="1">
    <location>
        <begin position="1"/>
        <end position="19"/>
    </location>
</feature>
<feature type="chain" id="PRO_0000034264" description="Thiol:disulfide interchange protein DsbA">
    <location>
        <begin position="20"/>
        <end position="207"/>
    </location>
</feature>
<feature type="domain" description="Thioredoxin" evidence="2">
    <location>
        <begin position="20"/>
        <end position="158"/>
    </location>
</feature>
<feature type="disulfide bond" description="Redox-active" evidence="2">
    <location>
        <begin position="49"/>
        <end position="52"/>
    </location>
</feature>
<reference key="1">
    <citation type="submission" date="1998-05" db="EMBL/GenBank/DDBJ databases">
        <authorList>
            <person name="Mendoza-del-Cueto M.T."/>
            <person name="Rotger-Anglada R."/>
        </authorList>
    </citation>
    <scope>NUCLEOTIDE SEQUENCE [GENOMIC DNA]</scope>
    <source>
        <strain>82139</strain>
    </source>
</reference>